<keyword id="KW-0067">ATP-binding</keyword>
<keyword id="KW-0547">Nucleotide-binding</keyword>
<keyword id="KW-1185">Reference proteome</keyword>
<keyword id="KW-0813">Transport</keyword>
<comment type="disruption phenotype">
    <text evidence="2">Probably essential, it was not disrupted in a global transposon mutagenesis study.</text>
</comment>
<comment type="similarity">
    <text evidence="3">Belongs to the ABC transporter superfamily.</text>
</comment>
<dbReference type="EMBL" id="L43967">
    <property type="protein sequence ID" value="AAC71526.2"/>
    <property type="molecule type" value="Genomic_DNA"/>
</dbReference>
<dbReference type="PIR" id="F64233">
    <property type="entry name" value="F64233"/>
</dbReference>
<dbReference type="RefSeq" id="WP_009885882.1">
    <property type="nucleotide sequence ID" value="NC_000908.2"/>
</dbReference>
<dbReference type="SMR" id="P47546"/>
<dbReference type="STRING" id="243273.MG_304"/>
<dbReference type="GeneID" id="88282467"/>
<dbReference type="KEGG" id="mge:MG_304"/>
<dbReference type="eggNOG" id="COG1122">
    <property type="taxonomic scope" value="Bacteria"/>
</dbReference>
<dbReference type="HOGENOM" id="CLU_000604_1_22_14"/>
<dbReference type="InParanoid" id="P47546"/>
<dbReference type="OrthoDB" id="399630at2"/>
<dbReference type="BioCyc" id="MGEN243273:G1GJ2-373-MONOMER"/>
<dbReference type="Proteomes" id="UP000000807">
    <property type="component" value="Chromosome"/>
</dbReference>
<dbReference type="GO" id="GO:0043190">
    <property type="term" value="C:ATP-binding cassette (ABC) transporter complex"/>
    <property type="evidence" value="ECO:0000318"/>
    <property type="project" value="GO_Central"/>
</dbReference>
<dbReference type="GO" id="GO:0005524">
    <property type="term" value="F:ATP binding"/>
    <property type="evidence" value="ECO:0000318"/>
    <property type="project" value="GO_Central"/>
</dbReference>
<dbReference type="GO" id="GO:0016887">
    <property type="term" value="F:ATP hydrolysis activity"/>
    <property type="evidence" value="ECO:0007669"/>
    <property type="project" value="InterPro"/>
</dbReference>
<dbReference type="GO" id="GO:0042626">
    <property type="term" value="F:ATPase-coupled transmembrane transporter activity"/>
    <property type="evidence" value="ECO:0000318"/>
    <property type="project" value="GO_Central"/>
</dbReference>
<dbReference type="CDD" id="cd03225">
    <property type="entry name" value="ABC_cobalt_CbiO_domain1"/>
    <property type="match status" value="1"/>
</dbReference>
<dbReference type="FunFam" id="3.40.50.300:FF:001422">
    <property type="entry name" value="Cobalt ABC transporter ATP-binding protein"/>
    <property type="match status" value="1"/>
</dbReference>
<dbReference type="Gene3D" id="3.40.50.300">
    <property type="entry name" value="P-loop containing nucleotide triphosphate hydrolases"/>
    <property type="match status" value="1"/>
</dbReference>
<dbReference type="InterPro" id="IPR003593">
    <property type="entry name" value="AAA+_ATPase"/>
</dbReference>
<dbReference type="InterPro" id="IPR003439">
    <property type="entry name" value="ABC_transporter-like_ATP-bd"/>
</dbReference>
<dbReference type="InterPro" id="IPR017871">
    <property type="entry name" value="ABC_transporter-like_CS"/>
</dbReference>
<dbReference type="InterPro" id="IPR015856">
    <property type="entry name" value="ABC_transpr_CbiO/EcfA_su"/>
</dbReference>
<dbReference type="InterPro" id="IPR050095">
    <property type="entry name" value="ECF_ABC_transporter_ATP-bd"/>
</dbReference>
<dbReference type="InterPro" id="IPR027417">
    <property type="entry name" value="P-loop_NTPase"/>
</dbReference>
<dbReference type="PANTHER" id="PTHR43553:SF24">
    <property type="entry name" value="ENERGY-COUPLING FACTOR TRANSPORTER ATP-BINDING PROTEIN ECFA1"/>
    <property type="match status" value="1"/>
</dbReference>
<dbReference type="PANTHER" id="PTHR43553">
    <property type="entry name" value="HEAVY METAL TRANSPORTER"/>
    <property type="match status" value="1"/>
</dbReference>
<dbReference type="Pfam" id="PF00005">
    <property type="entry name" value="ABC_tran"/>
    <property type="match status" value="1"/>
</dbReference>
<dbReference type="SMART" id="SM00382">
    <property type="entry name" value="AAA"/>
    <property type="match status" value="1"/>
</dbReference>
<dbReference type="SUPFAM" id="SSF52540">
    <property type="entry name" value="P-loop containing nucleoside triphosphate hydrolases"/>
    <property type="match status" value="1"/>
</dbReference>
<dbReference type="PROSITE" id="PS00211">
    <property type="entry name" value="ABC_TRANSPORTER_1"/>
    <property type="match status" value="1"/>
</dbReference>
<dbReference type="PROSITE" id="PS50893">
    <property type="entry name" value="ABC_TRANSPORTER_2"/>
    <property type="match status" value="1"/>
</dbReference>
<evidence type="ECO:0000255" key="1">
    <source>
        <dbReference type="PROSITE-ProRule" id="PRU00434"/>
    </source>
</evidence>
<evidence type="ECO:0000269" key="2">
    <source>
    </source>
</evidence>
<evidence type="ECO:0000305" key="3"/>
<organism>
    <name type="scientific">Mycoplasma genitalium (strain ATCC 33530 / DSM 19775 / NCTC 10195 / G37)</name>
    <name type="common">Mycoplasmoides genitalium</name>
    <dbReference type="NCBI Taxonomy" id="243273"/>
    <lineage>
        <taxon>Bacteria</taxon>
        <taxon>Bacillati</taxon>
        <taxon>Mycoplasmatota</taxon>
        <taxon>Mycoplasmoidales</taxon>
        <taxon>Mycoplasmoidaceae</taxon>
        <taxon>Mycoplasmoides</taxon>
    </lineage>
</organism>
<sequence>MLQVKNLSFKYPKHQNNVLNQISFNVQDGCHLAVIGHNGSGKSTLVKLLGGFLKAKKGTIFFNDKELTSVGFNKIGILLQDPDVQLLADTLHQELIFTLENHGVLASEMDKIINEVLTVVELKDKQFTPLKKLSFGEKQRAVFACLLAVKPQIYLLDEAFSMLDNKISNKLKKFVFDTIKKQNKIVINITHDFNDLFLADEIIFLSKGSLIKKFAPEAIYEQLDLFHNHHFNLPFPLLLAHKVAKQINKKTPSLSFELNDVVNWICKHLK</sequence>
<protein>
    <recommendedName>
        <fullName>Putative ABC transporter ATP-binding protein MG304</fullName>
    </recommendedName>
</protein>
<feature type="chain" id="PRO_0000093245" description="Putative ABC transporter ATP-binding protein MG304">
    <location>
        <begin position="1"/>
        <end position="270"/>
    </location>
</feature>
<feature type="domain" description="ABC transporter" evidence="1">
    <location>
        <begin position="1"/>
        <end position="232"/>
    </location>
</feature>
<feature type="binding site" evidence="1">
    <location>
        <begin position="36"/>
        <end position="43"/>
    </location>
    <ligand>
        <name>ATP</name>
        <dbReference type="ChEBI" id="CHEBI:30616"/>
    </ligand>
</feature>
<name>Y304_MYCGE</name>
<accession>P47546</accession>
<gene>
    <name type="ordered locus">MG304</name>
</gene>
<reference key="1">
    <citation type="journal article" date="1995" name="Science">
        <title>The minimal gene complement of Mycoplasma genitalium.</title>
        <authorList>
            <person name="Fraser C.M."/>
            <person name="Gocayne J.D."/>
            <person name="White O."/>
            <person name="Adams M.D."/>
            <person name="Clayton R.A."/>
            <person name="Fleischmann R.D."/>
            <person name="Bult C.J."/>
            <person name="Kerlavage A.R."/>
            <person name="Sutton G.G."/>
            <person name="Kelley J.M."/>
            <person name="Fritchman J.L."/>
            <person name="Weidman J.F."/>
            <person name="Small K.V."/>
            <person name="Sandusky M."/>
            <person name="Fuhrmann J.L."/>
            <person name="Nguyen D.T."/>
            <person name="Utterback T.R."/>
            <person name="Saudek D.M."/>
            <person name="Phillips C.A."/>
            <person name="Merrick J.M."/>
            <person name="Tomb J.-F."/>
            <person name="Dougherty B.A."/>
            <person name="Bott K.F."/>
            <person name="Hu P.-C."/>
            <person name="Lucier T.S."/>
            <person name="Peterson S.N."/>
            <person name="Smith H.O."/>
            <person name="Hutchison C.A. III"/>
            <person name="Venter J.C."/>
        </authorList>
    </citation>
    <scope>NUCLEOTIDE SEQUENCE [LARGE SCALE GENOMIC DNA]</scope>
    <source>
        <strain>ATCC 33530 / DSM 19775 / NCTC 10195 / G37</strain>
    </source>
</reference>
<reference key="2">
    <citation type="journal article" date="2006" name="Proc. Natl. Acad. Sci. U.S.A.">
        <title>Essential genes of a minimal bacterium.</title>
        <authorList>
            <person name="Glass J.I."/>
            <person name="Assad-Garcia N."/>
            <person name="Alperovich N."/>
            <person name="Yooseph S."/>
            <person name="Lewis M.R."/>
            <person name="Maruf M."/>
            <person name="Hutchison C.A. III"/>
            <person name="Smith H.O."/>
            <person name="Venter J.C."/>
        </authorList>
    </citation>
    <scope>SEQUENCE REVISION</scope>
    <scope>DISRUPTION PHENOTYPE</scope>
    <source>
        <strain>ATCC 33530 / DSM 19775 / NCTC 10195 / G37</strain>
    </source>
</reference>
<proteinExistence type="inferred from homology"/>